<keyword id="KW-1185">Reference proteome</keyword>
<reference key="1">
    <citation type="submission" date="1994-03" db="EMBL/GenBank/DDBJ databases">
        <authorList>
            <person name="Smith D.R."/>
            <person name="Robison K."/>
        </authorList>
    </citation>
    <scope>NUCLEOTIDE SEQUENCE [GENOMIC DNA]</scope>
</reference>
<reference key="2">
    <citation type="journal article" date="2001" name="Nature">
        <title>Massive gene decay in the leprosy bacillus.</title>
        <authorList>
            <person name="Cole S.T."/>
            <person name="Eiglmeier K."/>
            <person name="Parkhill J."/>
            <person name="James K.D."/>
            <person name="Thomson N.R."/>
            <person name="Wheeler P.R."/>
            <person name="Honore N."/>
            <person name="Garnier T."/>
            <person name="Churcher C.M."/>
            <person name="Harris D.E."/>
            <person name="Mungall K.L."/>
            <person name="Basham D."/>
            <person name="Brown D."/>
            <person name="Chillingworth T."/>
            <person name="Connor R."/>
            <person name="Davies R.M."/>
            <person name="Devlin K."/>
            <person name="Duthoy S."/>
            <person name="Feltwell T."/>
            <person name="Fraser A."/>
            <person name="Hamlin N."/>
            <person name="Holroyd S."/>
            <person name="Hornsby T."/>
            <person name="Jagels K."/>
            <person name="Lacroix C."/>
            <person name="Maclean J."/>
            <person name="Moule S."/>
            <person name="Murphy L.D."/>
            <person name="Oliver K."/>
            <person name="Quail M.A."/>
            <person name="Rajandream M.A."/>
            <person name="Rutherford K.M."/>
            <person name="Rutter S."/>
            <person name="Seeger K."/>
            <person name="Simon S."/>
            <person name="Simmonds M."/>
            <person name="Skelton J."/>
            <person name="Squares R."/>
            <person name="Squares S."/>
            <person name="Stevens K."/>
            <person name="Taylor K."/>
            <person name="Whitehead S."/>
            <person name="Woodward J.R."/>
            <person name="Barrell B.G."/>
        </authorList>
    </citation>
    <scope>NUCLEOTIDE SEQUENCE [LARGE SCALE GENOMIC DNA]</scope>
    <source>
        <strain>TN</strain>
    </source>
</reference>
<sequence>MSTAWDTVWHACSVIEHALQASHLTYSEFSGVPDGLLRLVVELPGERRLKTNAILSIGEHSVHVEAFVCRKPDENHEGVYRFLLKRNRRLFCVSYTLDNVGDIYLVGRMSLASVDTDEIDRVLGQVLEAVESDFNTLLELGFRSSIQKEWDWRISRGESLNNLQAFAHLIDDEGDGDASIYARP</sequence>
<comment type="similarity">
    <text evidence="1">To M.tuberculosis Rv0487.</text>
</comment>
<protein>
    <recommendedName>
        <fullName>Uncharacterized protein ML2442</fullName>
    </recommendedName>
</protein>
<feature type="chain" id="PRO_0000103691" description="Uncharacterized protein ML2442">
    <location>
        <begin position="1"/>
        <end position="184"/>
    </location>
</feature>
<evidence type="ECO:0000305" key="1"/>
<organism>
    <name type="scientific">Mycobacterium leprae (strain TN)</name>
    <dbReference type="NCBI Taxonomy" id="272631"/>
    <lineage>
        <taxon>Bacteria</taxon>
        <taxon>Bacillati</taxon>
        <taxon>Actinomycetota</taxon>
        <taxon>Actinomycetes</taxon>
        <taxon>Mycobacteriales</taxon>
        <taxon>Mycobacteriaceae</taxon>
        <taxon>Mycobacterium</taxon>
    </lineage>
</organism>
<accession>P54139</accession>
<dbReference type="EMBL" id="U00018">
    <property type="protein sequence ID" value="AAA17239.1"/>
    <property type="molecule type" value="Genomic_DNA"/>
</dbReference>
<dbReference type="EMBL" id="AL583925">
    <property type="protein sequence ID" value="CAC31959.1"/>
    <property type="molecule type" value="Genomic_DNA"/>
</dbReference>
<dbReference type="PIR" id="S72903">
    <property type="entry name" value="S72903"/>
</dbReference>
<dbReference type="RefSeq" id="NP_302583.1">
    <property type="nucleotide sequence ID" value="NC_002677.1"/>
</dbReference>
<dbReference type="RefSeq" id="WP_010908902.1">
    <property type="nucleotide sequence ID" value="NC_002677.1"/>
</dbReference>
<dbReference type="SMR" id="P54139"/>
<dbReference type="STRING" id="272631.gene:17576305"/>
<dbReference type="KEGG" id="mle:ML2442"/>
<dbReference type="PATRIC" id="fig|272631.5.peg.4689"/>
<dbReference type="Leproma" id="ML2442"/>
<dbReference type="eggNOG" id="ENOG5031R9K">
    <property type="taxonomic scope" value="Bacteria"/>
</dbReference>
<dbReference type="HOGENOM" id="CLU_111492_0_0_11"/>
<dbReference type="OrthoDB" id="3212317at2"/>
<dbReference type="Proteomes" id="UP000000806">
    <property type="component" value="Chromosome"/>
</dbReference>
<dbReference type="Gene3D" id="3.30.1460.10">
    <property type="match status" value="1"/>
</dbReference>
<dbReference type="InterPro" id="IPR019660">
    <property type="entry name" value="Put_sensory_transdc_reg_YbjN"/>
</dbReference>
<dbReference type="Pfam" id="PF10722">
    <property type="entry name" value="YbjN"/>
    <property type="match status" value="1"/>
</dbReference>
<dbReference type="SUPFAM" id="SSF69635">
    <property type="entry name" value="Type III secretory system chaperone-like"/>
    <property type="match status" value="1"/>
</dbReference>
<name>Y2442_MYCLE</name>
<proteinExistence type="predicted"/>
<gene>
    <name type="ordered locus">ML2442</name>
    <name type="ORF">B2168_C3_245</name>
    <name type="ORF">u2168e</name>
</gene>